<proteinExistence type="evidence at protein level"/>
<gene>
    <name evidence="18" type="primary">POGLUT1</name>
    <name evidence="18" type="synonym">C3orf9</name>
    <name evidence="14" type="synonym">CLP46</name>
    <name type="synonym">KTELC1</name>
    <name type="synonym">MDSRP</name>
    <name type="ORF">MDS010</name>
    <name evidence="13" type="ORF">UNQ490/PRO1006</name>
</gene>
<comment type="function">
    <text evidence="1 6 7 8 11 12">Dual specificity glycosyltransferase that catalyzes the transfer of glucose and xylose from UDP-glucose and UDP-xylose, respectively, to a serine residue found in the consensus sequence of C-X-S-X-P-C (PubMed:21081508, PubMed:21490058, PubMed:21949356, PubMed:27807076, PubMed:28775322). Specifically targets extracellular EGF repeats of protein such as CRB2, F7, F9 and NOTCH2 (PubMed:21081508, PubMed:21490058, PubMed:21949356, PubMed:27807076, PubMed:28775322). Acts as a positive regulator of Notch signaling by mediating O-glucosylation of Notch, leading to regulate muscle development (PubMed:27807076). Notch glucosylation does not affect Notch ligand binding (PubMed:21490058). Required during early development to promote gastrulation: acts by mediating O-glucosylation of CRB2, which is required for CRB2 localization to the cell membrane (By similarity).</text>
</comment>
<comment type="catalytic activity">
    <reaction evidence="6 12">
        <text>L-seryl-[EGF-like domain protein] + UDP-alpha-D-xylose = 3-O-(beta-D-xylosyl)-L-seryl-[EGF-like domain protein] + UDP + H(+)</text>
        <dbReference type="Rhea" id="RHEA:62016"/>
        <dbReference type="Rhea" id="RHEA-COMP:16010"/>
        <dbReference type="Rhea" id="RHEA-COMP:16011"/>
        <dbReference type="ChEBI" id="CHEBI:15378"/>
        <dbReference type="ChEBI" id="CHEBI:29999"/>
        <dbReference type="ChEBI" id="CHEBI:57632"/>
        <dbReference type="ChEBI" id="CHEBI:58223"/>
        <dbReference type="ChEBI" id="CHEBI:132085"/>
        <dbReference type="EC" id="2.4.2.63"/>
    </reaction>
</comment>
<comment type="catalytic activity">
    <reaction evidence="7 8">
        <text>L-seryl-[EGF-like domain protein] + UDP-alpha-D-glucose = 3-O-(beta-D-glucosyl)-L-seryl-[EGF-like domain protein] + UDP + H(+)</text>
        <dbReference type="Rhea" id="RHEA:58116"/>
        <dbReference type="Rhea" id="RHEA-COMP:14610"/>
        <dbReference type="Rhea" id="RHEA-COMP:16010"/>
        <dbReference type="ChEBI" id="CHEBI:15378"/>
        <dbReference type="ChEBI" id="CHEBI:29999"/>
        <dbReference type="ChEBI" id="CHEBI:58223"/>
        <dbReference type="ChEBI" id="CHEBI:58885"/>
        <dbReference type="ChEBI" id="CHEBI:140576"/>
        <dbReference type="EC" id="2.4.1.376"/>
    </reaction>
</comment>
<comment type="biophysicochemical properties">
    <kinetics>
        <KM evidence="6">72 uM for UDP-Glc</KM>
        <Vmax evidence="6">7.6 pmol/min/ug enzyme</Vmax>
    </kinetics>
</comment>
<comment type="pathway">
    <text evidence="6 7 8 12">Protein modification; protein glycosylation.</text>
</comment>
<comment type="subcellular location">
    <subcellularLocation>
        <location evidence="5 9 11">Endoplasmic reticulum lumen</location>
    </subcellularLocation>
</comment>
<comment type="tissue specificity">
    <text evidence="5 9">Expressed in most adult tissues at different intensities. Abundantly expressed in liver. Expressed also in brain, heart, skeletal muscle, spleen, kidney, placenta, lung and peripheral blood leukocyte. Not detectable in colon, thymus and small intestine. Expressed in the epidermis, especially in the upper parts, stratum spinosum and stratum granulosum (at protein level).</text>
</comment>
<comment type="disease" evidence="9 10">
    <disease id="DI-04044">
        <name>Dowling-Degos disease 4</name>
        <acronym>DDD4</acronym>
        <description>A form of Dowling-Degos disease, a genodermatosis manifesting with postpubertal reticulate hyperpigmentation that is progressive and disfiguring, and small hyperkeratotic dark brown papules that affect mainly the flexures and great skin folds. Patients usually show no abnormalities of the hair or nails. DDD4 is characterized by prominent involvement of non-flexural skin areas.</description>
        <dbReference type="MIM" id="615696"/>
    </disease>
    <text>The disease is caused by variants affecting the gene represented in this entry.</text>
</comment>
<comment type="disease" evidence="11">
    <disease id="DI-04915">
        <name>Muscular dystrophy, limb-girdle, autosomal recessive 21</name>
        <acronym>LGMDR21</acronym>
        <description>A form of autosomal recessive limb-girdle muscular dystrophy, a degenerative myopathy characterized by slowly progressive wasting and weakness of the proximal muscles of arms and legs around the pelvic or shoulder girdles, elevated creatine kinase levels and dystrophic features on muscle biopsy. LGMDR21 is characterized by young-adult onset.</description>
        <dbReference type="MIM" id="617232"/>
    </disease>
    <text>The disease is caused by variants affecting the gene represented in this entry.</text>
</comment>
<comment type="similarity">
    <text evidence="16">Belongs to the glycosyltransferase 90 family.</text>
</comment>
<sequence>MEWWASSPLRLWLLLFLLPSAQGRQKESGSKWKVFIDQINRSLENYEPCSSQNCSCYHGVIEEDLTPFRGGISRKMMAEVVRRKLGTHYQITKNRLYRENDCMFPSRCSGVEHFILEVIGRLPDMEMVINVRDYPQVPKWMEPAIPVFSFSKTSEYHDIMYPAWTFWEGGPAVWPIYPTGLGRWDLFREDLVRSAAQWPWKKKNSTAYFRGSRTSPERDPLILLSRKNPKLVDAEYTKNQAWKSMKDTLGKPAAKDVHLVDHCKYKYLFNFRGVAASFRFKHLFLCGSLVFHVGDEWLEFFYPQLKPWVHYIPVKTDLSNVQELLQFVKANDDVAQEIAERGSQFIRNHLQMDDITCYWENLLSEYSKFLSYNVTRRKGYDQIIPKMLKTEL</sequence>
<evidence type="ECO:0000250" key="1">
    <source>
        <dbReference type="UniProtKB" id="Q8BYB9"/>
    </source>
</evidence>
<evidence type="ECO:0000255" key="2">
    <source>
        <dbReference type="PROSITE-ProRule" id="PRU10138"/>
    </source>
</evidence>
<evidence type="ECO:0000269" key="3">
    <source>
    </source>
</evidence>
<evidence type="ECO:0000269" key="4">
    <source>
    </source>
</evidence>
<evidence type="ECO:0000269" key="5">
    <source>
    </source>
</evidence>
<evidence type="ECO:0000269" key="6">
    <source>
    </source>
</evidence>
<evidence type="ECO:0000269" key="7">
    <source>
    </source>
</evidence>
<evidence type="ECO:0000269" key="8">
    <source>
    </source>
</evidence>
<evidence type="ECO:0000269" key="9">
    <source>
    </source>
</evidence>
<evidence type="ECO:0000269" key="10">
    <source>
    </source>
</evidence>
<evidence type="ECO:0000269" key="11">
    <source>
    </source>
</evidence>
<evidence type="ECO:0000269" key="12">
    <source>
    </source>
</evidence>
<evidence type="ECO:0000303" key="13">
    <source>
    </source>
</evidence>
<evidence type="ECO:0000303" key="14">
    <source>
    </source>
</evidence>
<evidence type="ECO:0000303" key="15">
    <source>
    </source>
</evidence>
<evidence type="ECO:0000305" key="16"/>
<evidence type="ECO:0000305" key="17">
    <source>
    </source>
</evidence>
<evidence type="ECO:0000312" key="18">
    <source>
        <dbReference type="HGNC" id="HGNC:22954"/>
    </source>
</evidence>
<evidence type="ECO:0007744" key="19">
    <source>
        <dbReference type="PDB" id="5L0R"/>
    </source>
</evidence>
<evidence type="ECO:0007744" key="20">
    <source>
        <dbReference type="PDB" id="5L0S"/>
    </source>
</evidence>
<evidence type="ECO:0007744" key="21">
    <source>
        <dbReference type="PDB" id="5L0T"/>
    </source>
</evidence>
<evidence type="ECO:0007744" key="22">
    <source>
        <dbReference type="PDB" id="5L0U"/>
    </source>
</evidence>
<evidence type="ECO:0007744" key="23">
    <source>
        <dbReference type="PDB" id="5L0V"/>
    </source>
</evidence>
<evidence type="ECO:0007744" key="24">
    <source>
        <dbReference type="PDB" id="5UB5"/>
    </source>
</evidence>
<evidence type="ECO:0007829" key="25">
    <source>
        <dbReference type="PDB" id="5L0T"/>
    </source>
</evidence>
<evidence type="ECO:0007829" key="26">
    <source>
        <dbReference type="PDB" id="5L0V"/>
    </source>
</evidence>
<dbReference type="EC" id="2.4.1.376" evidence="7 8"/>
<dbReference type="EC" id="2.4.2.63" evidence="6 12"/>
<dbReference type="EMBL" id="AY298903">
    <property type="protein sequence ID" value="AAP56253.1"/>
    <property type="molecule type" value="mRNA"/>
</dbReference>
<dbReference type="EMBL" id="AY358581">
    <property type="protein sequence ID" value="AAQ88944.1"/>
    <property type="molecule type" value="mRNA"/>
</dbReference>
<dbReference type="EMBL" id="AK075444">
    <property type="protein sequence ID" value="BAC11625.1"/>
    <property type="molecule type" value="mRNA"/>
</dbReference>
<dbReference type="EMBL" id="AK222937">
    <property type="protein sequence ID" value="BAD96657.1"/>
    <property type="molecule type" value="mRNA"/>
</dbReference>
<dbReference type="EMBL" id="AK315367">
    <property type="protein sequence ID" value="BAG37760.1"/>
    <property type="molecule type" value="mRNA"/>
</dbReference>
<dbReference type="EMBL" id="AC074271">
    <property type="status" value="NOT_ANNOTATED_CDS"/>
    <property type="molecule type" value="Genomic_DNA"/>
</dbReference>
<dbReference type="EMBL" id="AC073352">
    <property type="status" value="NOT_ANNOTATED_CDS"/>
    <property type="molecule type" value="Genomic_DNA"/>
</dbReference>
<dbReference type="EMBL" id="CH471052">
    <property type="protein sequence ID" value="EAW79570.1"/>
    <property type="molecule type" value="Genomic_DNA"/>
</dbReference>
<dbReference type="EMBL" id="BC030614">
    <property type="protein sequence ID" value="AAH30614.1"/>
    <property type="molecule type" value="mRNA"/>
</dbReference>
<dbReference type="EMBL" id="BC048810">
    <property type="protein sequence ID" value="AAH48810.1"/>
    <property type="molecule type" value="mRNA"/>
</dbReference>
<dbReference type="CCDS" id="CCDS2988.1"/>
<dbReference type="RefSeq" id="NP_689518.1">
    <property type="nucleotide sequence ID" value="NM_152305.3"/>
</dbReference>
<dbReference type="PDB" id="5L0R">
    <property type="method" value="X-ray"/>
    <property type="resolution" value="1.50 A"/>
    <property type="chains" value="A=29-385"/>
</dbReference>
<dbReference type="PDB" id="5L0S">
    <property type="method" value="X-ray"/>
    <property type="resolution" value="1.45 A"/>
    <property type="chains" value="A=29-385"/>
</dbReference>
<dbReference type="PDB" id="5L0T">
    <property type="method" value="X-ray"/>
    <property type="resolution" value="1.43 A"/>
    <property type="chains" value="A=29-385"/>
</dbReference>
<dbReference type="PDB" id="5L0U">
    <property type="method" value="X-ray"/>
    <property type="resolution" value="1.80 A"/>
    <property type="chains" value="A=29-385"/>
</dbReference>
<dbReference type="PDB" id="5L0V">
    <property type="method" value="X-ray"/>
    <property type="resolution" value="1.30 A"/>
    <property type="chains" value="A=29-385"/>
</dbReference>
<dbReference type="PDB" id="5UB5">
    <property type="method" value="X-ray"/>
    <property type="resolution" value="2.09 A"/>
    <property type="chains" value="A=29-385"/>
</dbReference>
<dbReference type="PDBsum" id="5L0R"/>
<dbReference type="PDBsum" id="5L0S"/>
<dbReference type="PDBsum" id="5L0T"/>
<dbReference type="PDBsum" id="5L0U"/>
<dbReference type="PDBsum" id="5L0V"/>
<dbReference type="PDBsum" id="5UB5"/>
<dbReference type="SMR" id="Q8NBL1"/>
<dbReference type="BioGRID" id="121300">
    <property type="interactions" value="154"/>
</dbReference>
<dbReference type="FunCoup" id="Q8NBL1">
    <property type="interactions" value="2590"/>
</dbReference>
<dbReference type="IntAct" id="Q8NBL1">
    <property type="interactions" value="80"/>
</dbReference>
<dbReference type="STRING" id="9606.ENSP00000295588"/>
<dbReference type="CAZy" id="GT90">
    <property type="family name" value="Glycosyltransferase Family 90"/>
</dbReference>
<dbReference type="GlyConnect" id="1663">
    <property type="glycosylation" value="2 N-Linked glycans (1 site)"/>
</dbReference>
<dbReference type="GlyCosmos" id="Q8NBL1">
    <property type="glycosylation" value="4 sites, 2 glycans"/>
</dbReference>
<dbReference type="GlyGen" id="Q8NBL1">
    <property type="glycosylation" value="5 sites, 21 N-linked glycans (4 sites), 1 O-linked glycan (1 site)"/>
</dbReference>
<dbReference type="iPTMnet" id="Q8NBL1"/>
<dbReference type="PhosphoSitePlus" id="Q8NBL1"/>
<dbReference type="BioMuta" id="POGLUT1"/>
<dbReference type="DMDM" id="74730148"/>
<dbReference type="CPTAC" id="CPTAC-2230"/>
<dbReference type="jPOST" id="Q8NBL1"/>
<dbReference type="MassIVE" id="Q8NBL1"/>
<dbReference type="PaxDb" id="9606-ENSP00000295588"/>
<dbReference type="PeptideAtlas" id="Q8NBL1"/>
<dbReference type="ProteomicsDB" id="72789"/>
<dbReference type="Pumba" id="Q8NBL1"/>
<dbReference type="Antibodypedia" id="49938">
    <property type="antibodies" value="103 antibodies from 24 providers"/>
</dbReference>
<dbReference type="DNASU" id="56983"/>
<dbReference type="Ensembl" id="ENST00000295588.9">
    <property type="protein sequence ID" value="ENSP00000295588.4"/>
    <property type="gene ID" value="ENSG00000163389.12"/>
</dbReference>
<dbReference type="GeneID" id="56983"/>
<dbReference type="KEGG" id="hsa:56983"/>
<dbReference type="MANE-Select" id="ENST00000295588.9">
    <property type="protein sequence ID" value="ENSP00000295588.4"/>
    <property type="RefSeq nucleotide sequence ID" value="NM_152305.3"/>
    <property type="RefSeq protein sequence ID" value="NP_689518.1"/>
</dbReference>
<dbReference type="UCSC" id="uc003ecm.4">
    <property type="organism name" value="human"/>
</dbReference>
<dbReference type="AGR" id="HGNC:22954"/>
<dbReference type="CTD" id="56983"/>
<dbReference type="DisGeNET" id="56983"/>
<dbReference type="GeneCards" id="POGLUT1"/>
<dbReference type="HGNC" id="HGNC:22954">
    <property type="gene designation" value="POGLUT1"/>
</dbReference>
<dbReference type="HPA" id="ENSG00000163389">
    <property type="expression patterns" value="Low tissue specificity"/>
</dbReference>
<dbReference type="MalaCards" id="POGLUT1"/>
<dbReference type="MIM" id="615618">
    <property type="type" value="gene"/>
</dbReference>
<dbReference type="MIM" id="615696">
    <property type="type" value="phenotype"/>
</dbReference>
<dbReference type="MIM" id="617232">
    <property type="type" value="phenotype"/>
</dbReference>
<dbReference type="neXtProt" id="NX_Q8NBL1"/>
<dbReference type="OpenTargets" id="ENSG00000163389"/>
<dbReference type="Orphanet" id="79145">
    <property type="disease" value="Dowling-Degos disease"/>
</dbReference>
<dbReference type="Orphanet" id="480682">
    <property type="disease" value="POGLUT1-related limb-girdle muscular dystrophy R21"/>
</dbReference>
<dbReference type="PharmGKB" id="PA162393771"/>
<dbReference type="VEuPathDB" id="HostDB:ENSG00000163389"/>
<dbReference type="eggNOG" id="KOG2458">
    <property type="taxonomic scope" value="Eukaryota"/>
</dbReference>
<dbReference type="GeneTree" id="ENSGT00940000158283"/>
<dbReference type="HOGENOM" id="CLU_041919_1_0_1"/>
<dbReference type="InParanoid" id="Q8NBL1"/>
<dbReference type="OMA" id="EDDCMFP"/>
<dbReference type="OrthoDB" id="202415at2759"/>
<dbReference type="PAN-GO" id="Q8NBL1">
    <property type="GO annotations" value="5 GO annotations based on evolutionary models"/>
</dbReference>
<dbReference type="PhylomeDB" id="Q8NBL1"/>
<dbReference type="TreeFam" id="TF323280"/>
<dbReference type="BRENDA" id="2.4.1.376">
    <property type="organism ID" value="2681"/>
</dbReference>
<dbReference type="BRENDA" id="2.4.2.63">
    <property type="organism ID" value="2681"/>
</dbReference>
<dbReference type="PathwayCommons" id="Q8NBL1"/>
<dbReference type="Reactome" id="R-HSA-1912399">
    <property type="pathway name" value="Pre-NOTCH Processing in the Endoplasmic Reticulum"/>
</dbReference>
<dbReference type="SABIO-RK" id="Q8NBL1"/>
<dbReference type="SignaLink" id="Q8NBL1"/>
<dbReference type="SIGNOR" id="Q8NBL1"/>
<dbReference type="UniPathway" id="UPA00378"/>
<dbReference type="BioGRID-ORCS" id="56983">
    <property type="hits" value="16 hits in 1153 CRISPR screens"/>
</dbReference>
<dbReference type="ChiTaRS" id="POGLUT1">
    <property type="organism name" value="human"/>
</dbReference>
<dbReference type="GenomeRNAi" id="56983"/>
<dbReference type="Pharos" id="Q8NBL1">
    <property type="development level" value="Tbio"/>
</dbReference>
<dbReference type="PRO" id="PR:Q8NBL1"/>
<dbReference type="Proteomes" id="UP000005640">
    <property type="component" value="Chromosome 3"/>
</dbReference>
<dbReference type="RNAct" id="Q8NBL1">
    <property type="molecule type" value="protein"/>
</dbReference>
<dbReference type="Bgee" id="ENSG00000163389">
    <property type="expression patterns" value="Expressed in seminal vesicle and 170 other cell types or tissues"/>
</dbReference>
<dbReference type="ExpressionAtlas" id="Q8NBL1">
    <property type="expression patterns" value="baseline and differential"/>
</dbReference>
<dbReference type="GO" id="GO:0012505">
    <property type="term" value="C:endomembrane system"/>
    <property type="evidence" value="ECO:0000318"/>
    <property type="project" value="GO_Central"/>
</dbReference>
<dbReference type="GO" id="GO:0005783">
    <property type="term" value="C:endoplasmic reticulum"/>
    <property type="evidence" value="ECO:0000314"/>
    <property type="project" value="HPA"/>
</dbReference>
<dbReference type="GO" id="GO:0005788">
    <property type="term" value="C:endoplasmic reticulum lumen"/>
    <property type="evidence" value="ECO:0000314"/>
    <property type="project" value="UniProtKB"/>
</dbReference>
<dbReference type="GO" id="GO:0140561">
    <property type="term" value="F:EGF-domain serine glucosyltransferase activity"/>
    <property type="evidence" value="ECO:0007669"/>
    <property type="project" value="UniProtKB-EC"/>
</dbReference>
<dbReference type="GO" id="GO:0140562">
    <property type="term" value="F:EGF-domain serine xylosyltransferase activity"/>
    <property type="evidence" value="ECO:0007669"/>
    <property type="project" value="UniProtKB-EC"/>
</dbReference>
<dbReference type="GO" id="GO:0046527">
    <property type="term" value="F:glucosyltransferase activity"/>
    <property type="evidence" value="ECO:0000314"/>
    <property type="project" value="MGI"/>
</dbReference>
<dbReference type="GO" id="GO:0035251">
    <property type="term" value="F:UDP-glucosyltransferase activity"/>
    <property type="evidence" value="ECO:0000314"/>
    <property type="project" value="UniProtKB"/>
</dbReference>
<dbReference type="GO" id="GO:0035252">
    <property type="term" value="F:UDP-xylosyltransferase activity"/>
    <property type="evidence" value="ECO:0000315"/>
    <property type="project" value="UniProtKB"/>
</dbReference>
<dbReference type="GO" id="GO:0048318">
    <property type="term" value="P:axial mesoderm development"/>
    <property type="evidence" value="ECO:0007669"/>
    <property type="project" value="Ensembl"/>
</dbReference>
<dbReference type="GO" id="GO:0072359">
    <property type="term" value="P:circulatory system development"/>
    <property type="evidence" value="ECO:0007669"/>
    <property type="project" value="Ensembl"/>
</dbReference>
<dbReference type="GO" id="GO:0007369">
    <property type="term" value="P:gastrulation"/>
    <property type="evidence" value="ECO:0007669"/>
    <property type="project" value="UniProtKB-KW"/>
</dbReference>
<dbReference type="GO" id="GO:0060537">
    <property type="term" value="P:muscle tissue development"/>
    <property type="evidence" value="ECO:0000315"/>
    <property type="project" value="UniProtKB"/>
</dbReference>
<dbReference type="GO" id="GO:0048339">
    <property type="term" value="P:paraxial mesoderm development"/>
    <property type="evidence" value="ECO:0007669"/>
    <property type="project" value="Ensembl"/>
</dbReference>
<dbReference type="GO" id="GO:0045747">
    <property type="term" value="P:positive regulation of Notch signaling pathway"/>
    <property type="evidence" value="ECO:0000315"/>
    <property type="project" value="UniProtKB"/>
</dbReference>
<dbReference type="GO" id="GO:0006493">
    <property type="term" value="P:protein O-linked glycosylation"/>
    <property type="evidence" value="ECO:0000314"/>
    <property type="project" value="MGI"/>
</dbReference>
<dbReference type="GO" id="GO:0018242">
    <property type="term" value="P:protein O-linked glycosylation via serine"/>
    <property type="evidence" value="ECO:0000314"/>
    <property type="project" value="UniProtKB"/>
</dbReference>
<dbReference type="GO" id="GO:0010470">
    <property type="term" value="P:regulation of gastrulation"/>
    <property type="evidence" value="ECO:0000250"/>
    <property type="project" value="UniProtKB"/>
</dbReference>
<dbReference type="GO" id="GO:0001756">
    <property type="term" value="P:somitogenesis"/>
    <property type="evidence" value="ECO:0007669"/>
    <property type="project" value="Ensembl"/>
</dbReference>
<dbReference type="InterPro" id="IPR006598">
    <property type="entry name" value="CAP10"/>
</dbReference>
<dbReference type="InterPro" id="IPR051091">
    <property type="entry name" value="O-Glucosyltr/Glycosyltrsf_90"/>
</dbReference>
<dbReference type="PANTHER" id="PTHR12203">
    <property type="entry name" value="KDEL LYS-ASP-GLU-LEU CONTAINING - RELATED"/>
    <property type="match status" value="1"/>
</dbReference>
<dbReference type="PANTHER" id="PTHR12203:SF35">
    <property type="entry name" value="PROTEIN O-GLUCOSYLTRANSFERASE 1"/>
    <property type="match status" value="1"/>
</dbReference>
<dbReference type="Pfam" id="PF05686">
    <property type="entry name" value="Glyco_transf_90"/>
    <property type="match status" value="1"/>
</dbReference>
<dbReference type="SMART" id="SM00672">
    <property type="entry name" value="CAP10"/>
    <property type="match status" value="1"/>
</dbReference>
<name>PGLT1_HUMAN</name>
<accession>Q8NBL1</accession>
<accession>B2RD13</accession>
<accession>Q53GJ4</accession>
<accession>Q8N2T1</accession>
<feature type="signal peptide" evidence="3">
    <location>
        <begin position="1"/>
        <end position="23"/>
    </location>
</feature>
<feature type="chain" id="PRO_0000246685" description="Protein O-glucosyltransferase 1">
    <location>
        <begin position="24"/>
        <end position="392"/>
    </location>
</feature>
<feature type="region of interest" description="Interaction with the consensus sequence C-X-S-X-[PA]-C in peptide substrates" evidence="12">
    <location>
        <begin position="103"/>
        <end position="107"/>
    </location>
</feature>
<feature type="region of interest" description="Interaction with the consensus sequence C-X-S-X-[PA]-C in peptide substrates" evidence="12">
    <location>
        <begin position="172"/>
        <end position="178"/>
    </location>
</feature>
<feature type="short sequence motif" description="Prevents secretion from ER" evidence="2">
    <location>
        <begin position="389"/>
        <end position="392"/>
    </location>
</feature>
<feature type="active site" description="Proton donor/acceptor" evidence="17">
    <location>
        <position position="133"/>
    </location>
</feature>
<feature type="binding site" evidence="12 22">
    <location>
        <position position="177"/>
    </location>
    <ligand>
        <name>UDP-alpha-D-glucose</name>
        <dbReference type="ChEBI" id="CHEBI:58885"/>
    </ligand>
</feature>
<feature type="binding site" evidence="12 22">
    <location>
        <position position="212"/>
    </location>
    <ligand>
        <name>UDP-alpha-D-glucose</name>
        <dbReference type="ChEBI" id="CHEBI:58885"/>
    </ligand>
</feature>
<feature type="binding site" evidence="12 22">
    <location>
        <position position="218"/>
    </location>
    <ligand>
        <name>UDP-alpha-D-glucose</name>
        <dbReference type="ChEBI" id="CHEBI:58885"/>
    </ligand>
</feature>
<feature type="binding site" evidence="12 22">
    <location>
        <begin position="274"/>
        <end position="279"/>
    </location>
    <ligand>
        <name>UDP-alpha-D-glucose</name>
        <dbReference type="ChEBI" id="CHEBI:58885"/>
    </ligand>
</feature>
<feature type="site" description="Interaction with the consensus sequence C-X-S-X-[PA]-C in peptide substrates" evidence="12">
    <location>
        <position position="132"/>
    </location>
</feature>
<feature type="site" description="Interaction with the consensus sequence C-X-S-X-[PA]-C in peptide substrates" evidence="12">
    <location>
        <position position="240"/>
    </location>
</feature>
<feature type="glycosylation site" description="N-linked (GlcNAc...) asparagine" evidence="12 23">
    <location>
        <position position="40"/>
    </location>
</feature>
<feature type="glycosylation site" description="N-linked (GlcNAc...) asparagine" evidence="12 23">
    <location>
        <position position="53"/>
    </location>
</feature>
<feature type="glycosylation site" description="N-linked (GlcNAc...) asparagine" evidence="12 23">
    <location>
        <position position="204"/>
    </location>
</feature>
<feature type="glycosylation site" description="N-linked (GlcNAc...) asparagine" evidence="12 23">
    <location>
        <position position="373"/>
    </location>
</feature>
<feature type="disulfide bond" evidence="12 19 20 21 22 23 24">
    <location>
        <begin position="49"/>
        <end position="56"/>
    </location>
</feature>
<feature type="disulfide bond" evidence="12 19 20 21 22 23 24">
    <location>
        <begin position="54"/>
        <end position="357"/>
    </location>
</feature>
<feature type="disulfide bond" evidence="12 19 20 21 22 23 24">
    <location>
        <begin position="102"/>
        <end position="108"/>
    </location>
</feature>
<feature type="disulfide bond" evidence="12 19 20 21 22 23 24">
    <location>
        <begin position="263"/>
        <end position="286"/>
    </location>
</feature>
<feature type="sequence variant" id="VAR_027041" description="In dbSNP:rs11556605." evidence="4">
    <original>K</original>
    <variation>R</variation>
    <location>
        <position position="75"/>
    </location>
</feature>
<feature type="sequence variant" id="VAR_077954" description="In DDD4; dbSNP:rs1454300079." evidence="10">
    <original>G</original>
    <variation>E</variation>
    <location>
        <position position="170"/>
    </location>
</feature>
<feature type="sequence variant" id="VAR_077955" description="In DDD4." evidence="10">
    <location>
        <begin position="218"/>
        <end position="392"/>
    </location>
</feature>
<feature type="sequence variant" id="VAR_027042" description="In dbSNP:rs17852785." evidence="4">
    <original>P</original>
    <variation>T</variation>
    <location>
        <position position="229"/>
    </location>
</feature>
<feature type="sequence variant" id="VAR_077956" description="In LGMDR21; reduced glucosyltransferase and xylosyltransferase activities; impaired Notch signaling; dbSNP:rs550944082." evidence="11">
    <original>D</original>
    <variation>E</variation>
    <location>
        <position position="233"/>
    </location>
</feature>
<feature type="sequence variant" id="VAR_077957" description="In DDD4." evidence="10">
    <original>C</original>
    <variation>Y</variation>
    <location>
        <position position="286"/>
    </location>
</feature>
<feature type="mutagenesis site" description="Loss of O-glucosyltransferase activity." evidence="7">
    <original>G</original>
    <variation>E</variation>
    <location>
        <position position="169"/>
    </location>
</feature>
<feature type="sequence conflict" description="In Ref. 5; BAD96657." evidence="16" ref="5">
    <original>G</original>
    <variation>D</variation>
    <location>
        <position position="287"/>
    </location>
</feature>
<feature type="sequence conflict" description="In Ref. 5; BAD96657." evidence="16" ref="5">
    <original>S</original>
    <variation>P</variation>
    <location>
        <position position="371"/>
    </location>
</feature>
<feature type="helix" evidence="26">
    <location>
        <begin position="33"/>
        <end position="45"/>
    </location>
</feature>
<feature type="helix" evidence="26">
    <location>
        <begin position="54"/>
        <end position="57"/>
    </location>
</feature>
<feature type="helix" evidence="26">
    <location>
        <begin position="58"/>
        <end position="65"/>
    </location>
</feature>
<feature type="helix" evidence="26">
    <location>
        <begin position="66"/>
        <end position="68"/>
    </location>
</feature>
<feature type="helix" evidence="26">
    <location>
        <begin position="74"/>
        <end position="82"/>
    </location>
</feature>
<feature type="strand" evidence="26">
    <location>
        <begin position="85"/>
        <end position="92"/>
    </location>
</feature>
<feature type="strand" evidence="26">
    <location>
        <begin position="95"/>
        <end position="98"/>
    </location>
</feature>
<feature type="helix" evidence="26">
    <location>
        <begin position="105"/>
        <end position="118"/>
    </location>
</feature>
<feature type="helix" evidence="26">
    <location>
        <begin position="119"/>
        <end position="121"/>
    </location>
</feature>
<feature type="strand" evidence="26">
    <location>
        <begin position="124"/>
        <end position="129"/>
    </location>
</feature>
<feature type="strand" evidence="26">
    <location>
        <begin position="132"/>
        <end position="134"/>
    </location>
</feature>
<feature type="strand" evidence="25">
    <location>
        <begin position="141"/>
        <end position="143"/>
    </location>
</feature>
<feature type="strand" evidence="26">
    <location>
        <begin position="148"/>
        <end position="150"/>
    </location>
</feature>
<feature type="helix" evidence="26">
    <location>
        <begin position="164"/>
        <end position="166"/>
    </location>
</feature>
<feature type="turn" evidence="26">
    <location>
        <begin position="174"/>
        <end position="176"/>
    </location>
</feature>
<feature type="helix" evidence="26">
    <location>
        <begin position="184"/>
        <end position="197"/>
    </location>
</feature>
<feature type="helix" evidence="26">
    <location>
        <begin position="200"/>
        <end position="202"/>
    </location>
</feature>
<feature type="strand" evidence="26">
    <location>
        <begin position="203"/>
        <end position="211"/>
    </location>
</feature>
<feature type="helix" evidence="26">
    <location>
        <begin position="216"/>
        <end position="218"/>
    </location>
</feature>
<feature type="helix" evidence="26">
    <location>
        <begin position="219"/>
        <end position="227"/>
    </location>
</feature>
<feature type="turn" evidence="26">
    <location>
        <begin position="229"/>
        <end position="231"/>
    </location>
</feature>
<feature type="strand" evidence="26">
    <location>
        <begin position="232"/>
        <end position="237"/>
    </location>
</feature>
<feature type="helix" evidence="26">
    <location>
        <begin position="245"/>
        <end position="248"/>
    </location>
</feature>
<feature type="helix" evidence="26">
    <location>
        <begin position="259"/>
        <end position="262"/>
    </location>
</feature>
<feature type="strand" evidence="26">
    <location>
        <begin position="265"/>
        <end position="270"/>
    </location>
</feature>
<feature type="strand" evidence="26">
    <location>
        <begin position="273"/>
        <end position="276"/>
    </location>
</feature>
<feature type="helix" evidence="26">
    <location>
        <begin position="279"/>
        <end position="285"/>
    </location>
</feature>
<feature type="strand" evidence="26">
    <location>
        <begin position="289"/>
        <end position="293"/>
    </location>
</feature>
<feature type="helix" evidence="26">
    <location>
        <begin position="302"/>
        <end position="304"/>
    </location>
</feature>
<feature type="turn" evidence="26">
    <location>
        <begin position="307"/>
        <end position="309"/>
    </location>
</feature>
<feature type="strand" evidence="26">
    <location>
        <begin position="310"/>
        <end position="314"/>
    </location>
</feature>
<feature type="helix" evidence="26">
    <location>
        <begin position="321"/>
        <end position="330"/>
    </location>
</feature>
<feature type="helix" evidence="26">
    <location>
        <begin position="332"/>
        <end position="349"/>
    </location>
</feature>
<feature type="helix" evidence="26">
    <location>
        <begin position="352"/>
        <end position="367"/>
    </location>
</feature>
<feature type="strand" evidence="26">
    <location>
        <begin position="381"/>
        <end position="383"/>
    </location>
</feature>
<organism>
    <name type="scientific">Homo sapiens</name>
    <name type="common">Human</name>
    <dbReference type="NCBI Taxonomy" id="9606"/>
    <lineage>
        <taxon>Eukaryota</taxon>
        <taxon>Metazoa</taxon>
        <taxon>Chordata</taxon>
        <taxon>Craniata</taxon>
        <taxon>Vertebrata</taxon>
        <taxon>Euteleostomi</taxon>
        <taxon>Mammalia</taxon>
        <taxon>Eutheria</taxon>
        <taxon>Euarchontoglires</taxon>
        <taxon>Primates</taxon>
        <taxon>Haplorrhini</taxon>
        <taxon>Catarrhini</taxon>
        <taxon>Hominidae</taxon>
        <taxon>Homo</taxon>
    </lineage>
</organism>
<keyword id="KW-0002">3D-structure</keyword>
<keyword id="KW-0217">Developmental protein</keyword>
<keyword id="KW-0903">Direct protein sequencing</keyword>
<keyword id="KW-0225">Disease variant</keyword>
<keyword id="KW-1015">Disulfide bond</keyword>
<keyword id="KW-0256">Endoplasmic reticulum</keyword>
<keyword id="KW-0306">Gastrulation</keyword>
<keyword id="KW-0325">Glycoprotein</keyword>
<keyword id="KW-0328">Glycosyltransferase</keyword>
<keyword id="KW-0947">Limb-girdle muscular dystrophy</keyword>
<keyword id="KW-1267">Proteomics identification</keyword>
<keyword id="KW-1185">Reference proteome</keyword>
<keyword id="KW-0732">Signal</keyword>
<keyword id="KW-0808">Transferase</keyword>
<reference key="1">
    <citation type="journal article" date="2006" name="Gene">
        <title>Cloning, expression and characterization of a novel human CAP10-like gene hCLP46 from CD34+ stem/progenitor cells.</title>
        <authorList>
            <person name="Teng Y."/>
            <person name="Liu Q."/>
            <person name="Ma J."/>
            <person name="Liu F."/>
            <person name="Han Z."/>
            <person name="Wang Y."/>
            <person name="Wang W."/>
        </authorList>
    </citation>
    <scope>NUCLEOTIDE SEQUENCE [MRNA]</scope>
    <scope>TISSUE SPECIFICITY</scope>
    <scope>SUBCELLULAR LOCATION</scope>
    <source>
        <tissue>Hematopoietic stem cell</tissue>
    </source>
</reference>
<reference key="2">
    <citation type="journal article" date="2003" name="Genome Res.">
        <title>The secreted protein discovery initiative (SPDI), a large-scale effort to identify novel human secreted and transmembrane proteins: a bioinformatics assessment.</title>
        <authorList>
            <person name="Clark H.F."/>
            <person name="Gurney A.L."/>
            <person name="Abaya E."/>
            <person name="Baker K."/>
            <person name="Baldwin D.T."/>
            <person name="Brush J."/>
            <person name="Chen J."/>
            <person name="Chow B."/>
            <person name="Chui C."/>
            <person name="Crowley C."/>
            <person name="Currell B."/>
            <person name="Deuel B."/>
            <person name="Dowd P."/>
            <person name="Eaton D."/>
            <person name="Foster J.S."/>
            <person name="Grimaldi C."/>
            <person name="Gu Q."/>
            <person name="Hass P.E."/>
            <person name="Heldens S."/>
            <person name="Huang A."/>
            <person name="Kim H.S."/>
            <person name="Klimowski L."/>
            <person name="Jin Y."/>
            <person name="Johnson S."/>
            <person name="Lee J."/>
            <person name="Lewis L."/>
            <person name="Liao D."/>
            <person name="Mark M.R."/>
            <person name="Robbie E."/>
            <person name="Sanchez C."/>
            <person name="Schoenfeld J."/>
            <person name="Seshagiri S."/>
            <person name="Simmons L."/>
            <person name="Singh J."/>
            <person name="Smith V."/>
            <person name="Stinson J."/>
            <person name="Vagts A."/>
            <person name="Vandlen R.L."/>
            <person name="Watanabe C."/>
            <person name="Wieand D."/>
            <person name="Woods K."/>
            <person name="Xie M.-H."/>
            <person name="Yansura D.G."/>
            <person name="Yi S."/>
            <person name="Yu G."/>
            <person name="Yuan J."/>
            <person name="Zhang M."/>
            <person name="Zhang Z."/>
            <person name="Goddard A.D."/>
            <person name="Wood W.I."/>
            <person name="Godowski P.J."/>
            <person name="Gray A.M."/>
        </authorList>
    </citation>
    <scope>NUCLEOTIDE SEQUENCE [LARGE SCALE MRNA]</scope>
</reference>
<reference key="3">
    <citation type="journal article" date="2004" name="Nat. Genet.">
        <title>Complete sequencing and characterization of 21,243 full-length human cDNAs.</title>
        <authorList>
            <person name="Ota T."/>
            <person name="Suzuki Y."/>
            <person name="Nishikawa T."/>
            <person name="Otsuki T."/>
            <person name="Sugiyama T."/>
            <person name="Irie R."/>
            <person name="Wakamatsu A."/>
            <person name="Hayashi K."/>
            <person name="Sato H."/>
            <person name="Nagai K."/>
            <person name="Kimura K."/>
            <person name="Makita H."/>
            <person name="Sekine M."/>
            <person name="Obayashi M."/>
            <person name="Nishi T."/>
            <person name="Shibahara T."/>
            <person name="Tanaka T."/>
            <person name="Ishii S."/>
            <person name="Yamamoto J."/>
            <person name="Saito K."/>
            <person name="Kawai Y."/>
            <person name="Isono Y."/>
            <person name="Nakamura Y."/>
            <person name="Nagahari K."/>
            <person name="Murakami K."/>
            <person name="Yasuda T."/>
            <person name="Iwayanagi T."/>
            <person name="Wagatsuma M."/>
            <person name="Shiratori A."/>
            <person name="Sudo H."/>
            <person name="Hosoiri T."/>
            <person name="Kaku Y."/>
            <person name="Kodaira H."/>
            <person name="Kondo H."/>
            <person name="Sugawara M."/>
            <person name="Takahashi M."/>
            <person name="Kanda K."/>
            <person name="Yokoi T."/>
            <person name="Furuya T."/>
            <person name="Kikkawa E."/>
            <person name="Omura Y."/>
            <person name="Abe K."/>
            <person name="Kamihara K."/>
            <person name="Katsuta N."/>
            <person name="Sato K."/>
            <person name="Tanikawa M."/>
            <person name="Yamazaki M."/>
            <person name="Ninomiya K."/>
            <person name="Ishibashi T."/>
            <person name="Yamashita H."/>
            <person name="Murakawa K."/>
            <person name="Fujimori K."/>
            <person name="Tanai H."/>
            <person name="Kimata M."/>
            <person name="Watanabe M."/>
            <person name="Hiraoka S."/>
            <person name="Chiba Y."/>
            <person name="Ishida S."/>
            <person name="Ono Y."/>
            <person name="Takiguchi S."/>
            <person name="Watanabe S."/>
            <person name="Yosida M."/>
            <person name="Hotuta T."/>
            <person name="Kusano J."/>
            <person name="Kanehori K."/>
            <person name="Takahashi-Fujii A."/>
            <person name="Hara H."/>
            <person name="Tanase T.-O."/>
            <person name="Nomura Y."/>
            <person name="Togiya S."/>
            <person name="Komai F."/>
            <person name="Hara R."/>
            <person name="Takeuchi K."/>
            <person name="Arita M."/>
            <person name="Imose N."/>
            <person name="Musashino K."/>
            <person name="Yuuki H."/>
            <person name="Oshima A."/>
            <person name="Sasaki N."/>
            <person name="Aotsuka S."/>
            <person name="Yoshikawa Y."/>
            <person name="Matsunawa H."/>
            <person name="Ichihara T."/>
            <person name="Shiohata N."/>
            <person name="Sano S."/>
            <person name="Moriya S."/>
            <person name="Momiyama H."/>
            <person name="Satoh N."/>
            <person name="Takami S."/>
            <person name="Terashima Y."/>
            <person name="Suzuki O."/>
            <person name="Nakagawa S."/>
            <person name="Senoh A."/>
            <person name="Mizoguchi H."/>
            <person name="Goto Y."/>
            <person name="Shimizu F."/>
            <person name="Wakebe H."/>
            <person name="Hishigaki H."/>
            <person name="Watanabe T."/>
            <person name="Sugiyama A."/>
            <person name="Takemoto M."/>
            <person name="Kawakami B."/>
            <person name="Yamazaki M."/>
            <person name="Watanabe K."/>
            <person name="Kumagai A."/>
            <person name="Itakura S."/>
            <person name="Fukuzumi Y."/>
            <person name="Fujimori Y."/>
            <person name="Komiyama M."/>
            <person name="Tashiro H."/>
            <person name="Tanigami A."/>
            <person name="Fujiwara T."/>
            <person name="Ono T."/>
            <person name="Yamada K."/>
            <person name="Fujii Y."/>
            <person name="Ozaki K."/>
            <person name="Hirao M."/>
            <person name="Ohmori Y."/>
            <person name="Kawabata A."/>
            <person name="Hikiji T."/>
            <person name="Kobatake N."/>
            <person name="Inagaki H."/>
            <person name="Ikema Y."/>
            <person name="Okamoto S."/>
            <person name="Okitani R."/>
            <person name="Kawakami T."/>
            <person name="Noguchi S."/>
            <person name="Itoh T."/>
            <person name="Shigeta K."/>
            <person name="Senba T."/>
            <person name="Matsumura K."/>
            <person name="Nakajima Y."/>
            <person name="Mizuno T."/>
            <person name="Morinaga M."/>
            <person name="Sasaki M."/>
            <person name="Togashi T."/>
            <person name="Oyama M."/>
            <person name="Hata H."/>
            <person name="Watanabe M."/>
            <person name="Komatsu T."/>
            <person name="Mizushima-Sugano J."/>
            <person name="Satoh T."/>
            <person name="Shirai Y."/>
            <person name="Takahashi Y."/>
            <person name="Nakagawa K."/>
            <person name="Okumura K."/>
            <person name="Nagase T."/>
            <person name="Nomura N."/>
            <person name="Kikuchi H."/>
            <person name="Masuho Y."/>
            <person name="Yamashita R."/>
            <person name="Nakai K."/>
            <person name="Yada T."/>
            <person name="Nakamura Y."/>
            <person name="Ohara O."/>
            <person name="Isogai T."/>
            <person name="Sugano S."/>
        </authorList>
    </citation>
    <scope>NUCLEOTIDE SEQUENCE [LARGE SCALE MRNA]</scope>
</reference>
<reference key="4">
    <citation type="journal article" date="2005" name="DNA Res.">
        <title>Signal sequence and keyword trap in silico for selection of full-length human cDNAs encoding secretion or membrane proteins from oligo-capped cDNA libraries.</title>
        <authorList>
            <person name="Otsuki T."/>
            <person name="Ota T."/>
            <person name="Nishikawa T."/>
            <person name="Hayashi K."/>
            <person name="Suzuki Y."/>
            <person name="Yamamoto J."/>
            <person name="Wakamatsu A."/>
            <person name="Kimura K."/>
            <person name="Sakamoto K."/>
            <person name="Hatano N."/>
            <person name="Kawai Y."/>
            <person name="Ishii S."/>
            <person name="Saito K."/>
            <person name="Kojima S."/>
            <person name="Sugiyama T."/>
            <person name="Ono T."/>
            <person name="Okano K."/>
            <person name="Yoshikawa Y."/>
            <person name="Aotsuka S."/>
            <person name="Sasaki N."/>
            <person name="Hattori A."/>
            <person name="Okumura K."/>
            <person name="Nagai K."/>
            <person name="Sugano S."/>
            <person name="Isogai T."/>
        </authorList>
    </citation>
    <scope>NUCLEOTIDE SEQUENCE [LARGE SCALE MRNA]</scope>
    <source>
        <tissue>Placenta</tissue>
    </source>
</reference>
<reference key="5">
    <citation type="submission" date="2005-04" db="EMBL/GenBank/DDBJ databases">
        <authorList>
            <person name="Suzuki Y."/>
            <person name="Sugano S."/>
            <person name="Totoki Y."/>
            <person name="Toyoda A."/>
            <person name="Takeda T."/>
            <person name="Sakaki Y."/>
            <person name="Tanaka A."/>
            <person name="Yokoyama S."/>
        </authorList>
    </citation>
    <scope>NUCLEOTIDE SEQUENCE [LARGE SCALE MRNA]</scope>
</reference>
<reference key="6">
    <citation type="journal article" date="2006" name="Nature">
        <title>The DNA sequence, annotation and analysis of human chromosome 3.</title>
        <authorList>
            <person name="Muzny D.M."/>
            <person name="Scherer S.E."/>
            <person name="Kaul R."/>
            <person name="Wang J."/>
            <person name="Yu J."/>
            <person name="Sudbrak R."/>
            <person name="Buhay C.J."/>
            <person name="Chen R."/>
            <person name="Cree A."/>
            <person name="Ding Y."/>
            <person name="Dugan-Rocha S."/>
            <person name="Gill R."/>
            <person name="Gunaratne P."/>
            <person name="Harris R.A."/>
            <person name="Hawes A.C."/>
            <person name="Hernandez J."/>
            <person name="Hodgson A.V."/>
            <person name="Hume J."/>
            <person name="Jackson A."/>
            <person name="Khan Z.M."/>
            <person name="Kovar-Smith C."/>
            <person name="Lewis L.R."/>
            <person name="Lozado R.J."/>
            <person name="Metzker M.L."/>
            <person name="Milosavljevic A."/>
            <person name="Miner G.R."/>
            <person name="Morgan M.B."/>
            <person name="Nazareth L.V."/>
            <person name="Scott G."/>
            <person name="Sodergren E."/>
            <person name="Song X.-Z."/>
            <person name="Steffen D."/>
            <person name="Wei S."/>
            <person name="Wheeler D.A."/>
            <person name="Wright M.W."/>
            <person name="Worley K.C."/>
            <person name="Yuan Y."/>
            <person name="Zhang Z."/>
            <person name="Adams C.Q."/>
            <person name="Ansari-Lari M.A."/>
            <person name="Ayele M."/>
            <person name="Brown M.J."/>
            <person name="Chen G."/>
            <person name="Chen Z."/>
            <person name="Clendenning J."/>
            <person name="Clerc-Blankenburg K.P."/>
            <person name="Chen R."/>
            <person name="Chen Z."/>
            <person name="Davis C."/>
            <person name="Delgado O."/>
            <person name="Dinh H.H."/>
            <person name="Dong W."/>
            <person name="Draper H."/>
            <person name="Ernst S."/>
            <person name="Fu G."/>
            <person name="Gonzalez-Garay M.L."/>
            <person name="Garcia D.K."/>
            <person name="Gillett W."/>
            <person name="Gu J."/>
            <person name="Hao B."/>
            <person name="Haugen E."/>
            <person name="Havlak P."/>
            <person name="He X."/>
            <person name="Hennig S."/>
            <person name="Hu S."/>
            <person name="Huang W."/>
            <person name="Jackson L.R."/>
            <person name="Jacob L.S."/>
            <person name="Kelly S.H."/>
            <person name="Kube M."/>
            <person name="Levy R."/>
            <person name="Li Z."/>
            <person name="Liu B."/>
            <person name="Liu J."/>
            <person name="Liu W."/>
            <person name="Lu J."/>
            <person name="Maheshwari M."/>
            <person name="Nguyen B.-V."/>
            <person name="Okwuonu G.O."/>
            <person name="Palmeiri A."/>
            <person name="Pasternak S."/>
            <person name="Perez L.M."/>
            <person name="Phelps K.A."/>
            <person name="Plopper F.J."/>
            <person name="Qiang B."/>
            <person name="Raymond C."/>
            <person name="Rodriguez R."/>
            <person name="Saenphimmachak C."/>
            <person name="Santibanez J."/>
            <person name="Shen H."/>
            <person name="Shen Y."/>
            <person name="Subramanian S."/>
            <person name="Tabor P.E."/>
            <person name="Verduzco D."/>
            <person name="Waldron L."/>
            <person name="Wang J."/>
            <person name="Wang J."/>
            <person name="Wang Q."/>
            <person name="Williams G.A."/>
            <person name="Wong G.K.-S."/>
            <person name="Yao Z."/>
            <person name="Zhang J."/>
            <person name="Zhang X."/>
            <person name="Zhao G."/>
            <person name="Zhou J."/>
            <person name="Zhou Y."/>
            <person name="Nelson D."/>
            <person name="Lehrach H."/>
            <person name="Reinhardt R."/>
            <person name="Naylor S.L."/>
            <person name="Yang H."/>
            <person name="Olson M."/>
            <person name="Weinstock G."/>
            <person name="Gibbs R.A."/>
        </authorList>
    </citation>
    <scope>NUCLEOTIDE SEQUENCE [LARGE SCALE GENOMIC DNA]</scope>
</reference>
<reference key="7">
    <citation type="submission" date="2005-09" db="EMBL/GenBank/DDBJ databases">
        <authorList>
            <person name="Mural R.J."/>
            <person name="Istrail S."/>
            <person name="Sutton G.G."/>
            <person name="Florea L."/>
            <person name="Halpern A.L."/>
            <person name="Mobarry C.M."/>
            <person name="Lippert R."/>
            <person name="Walenz B."/>
            <person name="Shatkay H."/>
            <person name="Dew I."/>
            <person name="Miller J.R."/>
            <person name="Flanigan M.J."/>
            <person name="Edwards N.J."/>
            <person name="Bolanos R."/>
            <person name="Fasulo D."/>
            <person name="Halldorsson B.V."/>
            <person name="Hannenhalli S."/>
            <person name="Turner R."/>
            <person name="Yooseph S."/>
            <person name="Lu F."/>
            <person name="Nusskern D.R."/>
            <person name="Shue B.C."/>
            <person name="Zheng X.H."/>
            <person name="Zhong F."/>
            <person name="Delcher A.L."/>
            <person name="Huson D.H."/>
            <person name="Kravitz S.A."/>
            <person name="Mouchard L."/>
            <person name="Reinert K."/>
            <person name="Remington K.A."/>
            <person name="Clark A.G."/>
            <person name="Waterman M.S."/>
            <person name="Eichler E.E."/>
            <person name="Adams M.D."/>
            <person name="Hunkapiller M.W."/>
            <person name="Myers E.W."/>
            <person name="Venter J.C."/>
        </authorList>
    </citation>
    <scope>NUCLEOTIDE SEQUENCE [LARGE SCALE GENOMIC DNA]</scope>
</reference>
<reference key="8">
    <citation type="journal article" date="2004" name="Genome Res.">
        <title>The status, quality, and expansion of the NIH full-length cDNA project: the Mammalian Gene Collection (MGC).</title>
        <authorList>
            <consortium name="The MGC Project Team"/>
        </authorList>
    </citation>
    <scope>NUCLEOTIDE SEQUENCE [LARGE SCALE MRNA]</scope>
    <scope>VARIANTS ARG-75 AND THR-229</scope>
    <source>
        <tissue>Fetal brain</tissue>
        <tissue>Hypothalamus</tissue>
    </source>
</reference>
<reference key="9">
    <citation type="journal article" date="2004" name="Protein Sci.">
        <title>Signal peptide prediction based on analysis of experimentally verified cleavage sites.</title>
        <authorList>
            <person name="Zhang Z."/>
            <person name="Henzel W.J."/>
        </authorList>
    </citation>
    <scope>PROTEIN SEQUENCE OF 24-38</scope>
</reference>
<reference key="10">
    <citation type="journal article" date="2011" name="Development">
        <title>Regulation of mammalian Notch signaling and embryonic development by the protein O-glucosyltransferase Rumi.</title>
        <authorList>
            <person name="Fernandez-Valdivia R."/>
            <person name="Takeuchi H."/>
            <person name="Samarghandi A."/>
            <person name="Lopez M."/>
            <person name="Leonardi J."/>
            <person name="Haltiwanger R.S."/>
            <person name="Jafar-Nejad H."/>
        </authorList>
    </citation>
    <scope>FUNCTION</scope>
    <scope>MUTAGENESIS OF GLY-169</scope>
</reference>
<reference key="11">
    <citation type="journal article" date="2011" name="Glycobiology">
        <title>Universal phosphatase-coupled glycosyltransferase assay.</title>
        <authorList>
            <person name="Wu Z.L."/>
            <person name="Ethen C.M."/>
            <person name="Prather B."/>
            <person name="Machacek M."/>
            <person name="Jiang W."/>
        </authorList>
    </citation>
    <scope>FUNCTION</scope>
    <scope>CATALYTIC ACTIVITY</scope>
    <scope>BIOPHYSICOCHEMICAL PROPERTIES</scope>
</reference>
<reference key="12">
    <citation type="journal article" date="2011" name="Proc. Natl. Acad. Sci. U.S.A.">
        <title>Rumi functions as both a protein O-glucosyltransferase and a protein O-xylosyltransferase.</title>
        <authorList>
            <person name="Takeuchi H."/>
            <person name="Fernandez-Valdivia R.C."/>
            <person name="Caswell D.S."/>
            <person name="Nita-Lazar A."/>
            <person name="Rana N.A."/>
            <person name="Garner T.P."/>
            <person name="Weldeghiorghis T.K."/>
            <person name="Macnaughtan M.A."/>
            <person name="Jafar-Nejad H."/>
            <person name="Haltiwanger R.S."/>
        </authorList>
    </citation>
    <scope>FUNCTION</scope>
</reference>
<reference key="13">
    <citation type="journal article" date="2014" name="Am. J. Hum. Genet.">
        <title>Mutations in POGLUT1, encoding protein O-glucosyltransferase 1, cause autosomal-dominant Dowling-Degos disease.</title>
        <authorList>
            <person name="Basmanav F.B."/>
            <person name="Oprisoreanu A.M."/>
            <person name="Pasternack S.M."/>
            <person name="Thiele H."/>
            <person name="Fritz G."/>
            <person name="Wenzel J."/>
            <person name="Grosser L."/>
            <person name="Wehner M."/>
            <person name="Wolf S."/>
            <person name="Fagerberg C."/>
            <person name="Bygum A."/>
            <person name="Altmuller J."/>
            <person name="Rutten A."/>
            <person name="Parmentier L."/>
            <person name="El Shabrawi-Caelen L."/>
            <person name="Hafner C."/>
            <person name="Nurnberg P."/>
            <person name="Kruse R."/>
            <person name="Schoch S."/>
            <person name="Hanneken S."/>
            <person name="Betz R.C."/>
        </authorList>
    </citation>
    <scope>INVOLVEMENT IN DDD4</scope>
    <scope>SUBCELLULAR LOCATION</scope>
    <scope>TISSUE SPECIFICITY</scope>
</reference>
<reference key="14">
    <citation type="journal article" date="2016" name="EMBO Mol. Med.">
        <title>A POGLUT1 mutation causes a muscular dystrophy with reduced Notch signaling and satellite cell loss.</title>
        <authorList>
            <person name="Servian-Morilla E."/>
            <person name="Takeuchi H."/>
            <person name="Lee T.V."/>
            <person name="Clarimon J."/>
            <person name="Mavillard F."/>
            <person name="Area-Gomez E."/>
            <person name="Rivas E."/>
            <person name="Nieto-Gonzalez J.L."/>
            <person name="Rivero M.C."/>
            <person name="Cabrera-Serrano M."/>
            <person name="Gomez-Sanchez L."/>
            <person name="Martinez-Lopez J.A."/>
            <person name="Estrada B."/>
            <person name="Marquez C."/>
            <person name="Morgado Y."/>
            <person name="Suarez-Calvet X."/>
            <person name="Pita G."/>
            <person name="Bigot A."/>
            <person name="Gallardo E."/>
            <person name="Fernandez-Chacon R."/>
            <person name="Hirano M."/>
            <person name="Haltiwanger R.S."/>
            <person name="Jafar-Nejad H."/>
            <person name="Paradas C."/>
        </authorList>
    </citation>
    <scope>FUNCTION</scope>
    <scope>SUBCELLULAR LOCATION</scope>
    <scope>INVOLVEMENT IN LGMDR21</scope>
    <scope>VARIANT LGMDR21 GLU-233</scope>
    <scope>CHARACTERIZATION OF VARIANT LGMDR21 GLU-233</scope>
</reference>
<reference evidence="19 20 21 22 23 24" key="15">
    <citation type="journal article" date="2017" name="Nat. Commun.">
        <title>Structural basis of Notch O-glucosylation and O-xylosylation by mammalian protein-O-glucosyltransferase 1 (POGLUT1).</title>
        <authorList>
            <person name="Li Z."/>
            <person name="Fischer M."/>
            <person name="Satkunarajah M."/>
            <person name="Zhou D."/>
            <person name="Withers S.G."/>
            <person name="Rini J.M."/>
        </authorList>
    </citation>
    <scope>X-RAY CRYSTALLOGRAPHY (1.30 ANGSTROMS) OF 29-385 IN COMPLEXES WITH UDP-GLUCOSE ANALOG AND PEPTIDE SUBSTRATES</scope>
    <scope>FUNCTION</scope>
    <scope>CATALYTIC ACTIVITY</scope>
    <scope>PATHWAY</scope>
    <scope>DISULFIDE BONDS</scope>
    <scope>GLYCOSYLATION AT ASN-40; ASN-53; ASN-204 AND ASN-373</scope>
</reference>
<reference key="16">
    <citation type="journal article" date="2017" name="Br. J. Dermatol.">
        <title>Mutations in POGLUT1 in Galli-Galli/Dowling-Degos disease.</title>
        <authorList>
            <person name="Wilson N.J."/>
            <person name="Cole C."/>
            <person name="Kroboth K."/>
            <person name="Hunter W.N."/>
            <person name="Mann J.A."/>
            <person name="McLean W.H."/>
            <person name="Kernland Lang K."/>
            <person name="Beltraminelli H."/>
            <person name="Sabroe R.A."/>
            <person name="Tiffin N."/>
            <person name="Sobey G.J."/>
            <person name="Borradori L."/>
            <person name="Simpson E."/>
            <person name="Smith F.J."/>
        </authorList>
    </citation>
    <scope>VARIANTS DDD4 GLU-170; 218-ARG--LEU-392 DEL AND TYR-286</scope>
</reference>
<protein>
    <recommendedName>
        <fullName evidence="16">Protein O-glucosyltransferase 1</fullName>
        <ecNumber evidence="7 8">2.4.1.376</ecNumber>
    </recommendedName>
    <alternativeName>
        <fullName evidence="14">CAP10-like 46 kDa protein</fullName>
        <shortName evidence="14">hCLP46</shortName>
    </alternativeName>
    <alternativeName>
        <fullName>KTEL motif-containing protein 1</fullName>
    </alternativeName>
    <alternativeName>
        <fullName>Myelodysplastic syndromes relative protein</fullName>
    </alternativeName>
    <alternativeName>
        <fullName evidence="15">O-glucosyltransferase Rumi homolog</fullName>
        <shortName evidence="15">hRumi</shortName>
    </alternativeName>
    <alternativeName>
        <fullName evidence="16">Protein O-xylosyltransferase POGLUT1</fullName>
        <ecNumber evidence="6 12">2.4.2.63</ecNumber>
    </alternativeName>
</protein>